<sequence length="258" mass="28181">MPIEAVAVASLPMASRSAALCFSSAAAARSRSRSRHGRMAVSCDAGASDLLYSSLAAKLLGPPTSFDAGKLTVEFAHSHGNSSSGFPRAYTLTHCDFTANLTLAVSDTIAADRRLRADDVFAEWKQQQQQEGMALHVHCFVSGANLLHGLAAGFRYYVFSKELPLVLKAVVHGDALLFAEQPELLEAKVWVHFHSSSNAKYNRLECWGPLREAANAETTHKRHALEQLHNAITKGTRRRRRKWSSPDAIFSALLALLL</sequence>
<comment type="function">
    <text evidence="1">Promotes chlorophyll degradation in leaves. May be involved in LHCI proteins degradation, regulating the balance between LHCI and LHCII.</text>
</comment>
<comment type="tissue specificity">
    <text evidence="1">Strongly expressed in leaves, stems and panicles, and at lower levels in roots and seeds.</text>
</comment>
<comment type="developmental stage">
    <text evidence="1">Higher expression in young leaves. Down-regulated during dark-induced and natural senescence.</text>
</comment>
<comment type="induction">
    <text evidence="1">Down-regulated by dark-induced senescence. Circadian-regulation with a strong expression during the transition from dark to light.</text>
</comment>
<comment type="similarity">
    <text evidence="2">Belongs to the staygreen family.</text>
</comment>
<comment type="sequence caution" evidence="2">
    <conflict type="erroneous gene model prediction">
        <sequence resource="EMBL-CDS" id="CAE05787"/>
    </conflict>
</comment>
<protein>
    <recommendedName>
        <fullName>Protein STAY-GREEN LIKE, chloroplastic</fullName>
    </recommendedName>
</protein>
<gene>
    <name type="ordered locus">Os04g0692600</name>
    <name type="ordered locus">LOC_Os04g59610</name>
    <name type="ORF">OsJ_16753</name>
    <name type="ORF">OSJNBb0020J19.16</name>
</gene>
<evidence type="ECO:0000269" key="1">
    <source>
    </source>
</evidence>
<evidence type="ECO:0000305" key="2"/>
<proteinExistence type="evidence at transcript level"/>
<keyword id="KW-1185">Reference proteome</keyword>
<dbReference type="EMBL" id="AL606656">
    <property type="protein sequence ID" value="CAE05787.3"/>
    <property type="status" value="ALT_SEQ"/>
    <property type="molecule type" value="Genomic_DNA"/>
</dbReference>
<dbReference type="EMBL" id="AP008210">
    <property type="protein sequence ID" value="BAF16284.1"/>
    <property type="molecule type" value="Genomic_DNA"/>
</dbReference>
<dbReference type="EMBL" id="AP014960">
    <property type="protein sequence ID" value="BAS91800.1"/>
    <property type="molecule type" value="Genomic_DNA"/>
</dbReference>
<dbReference type="EMBL" id="CM000141">
    <property type="protein sequence ID" value="EEE61976.1"/>
    <property type="molecule type" value="Genomic_DNA"/>
</dbReference>
<dbReference type="EMBL" id="AK105888">
    <property type="protein sequence ID" value="BAG97418.1"/>
    <property type="molecule type" value="mRNA"/>
</dbReference>
<dbReference type="EMBL" id="AK105982">
    <property type="protein sequence ID" value="BAG97482.1"/>
    <property type="molecule type" value="mRNA"/>
</dbReference>
<dbReference type="SMR" id="Q0J8Q3"/>
<dbReference type="STRING" id="39947.Q0J8Q3"/>
<dbReference type="PaxDb" id="39947-Q0J8Q3"/>
<dbReference type="EnsemblPlants" id="Os04t0692600-01">
    <property type="protein sequence ID" value="Os04t0692600-01"/>
    <property type="gene ID" value="Os04g0692600"/>
</dbReference>
<dbReference type="EnsemblPlants" id="Os04t0692600-03">
    <property type="protein sequence ID" value="Os04t0692600-03"/>
    <property type="gene ID" value="Os04g0692600"/>
</dbReference>
<dbReference type="Gramene" id="Os04t0692600-01">
    <property type="protein sequence ID" value="Os04t0692600-01"/>
    <property type="gene ID" value="Os04g0692600"/>
</dbReference>
<dbReference type="Gramene" id="Os04t0692600-03">
    <property type="protein sequence ID" value="Os04t0692600-03"/>
    <property type="gene ID" value="Os04g0692600"/>
</dbReference>
<dbReference type="KEGG" id="dosa:Os04g0692600"/>
<dbReference type="eggNOG" id="ENOG502QS93">
    <property type="taxonomic scope" value="Eukaryota"/>
</dbReference>
<dbReference type="HOGENOM" id="CLU_073517_1_0_1"/>
<dbReference type="InParanoid" id="Q0J8Q3"/>
<dbReference type="OMA" id="KNEMCLH"/>
<dbReference type="OrthoDB" id="1931912at2759"/>
<dbReference type="Proteomes" id="UP000000763">
    <property type="component" value="Chromosome 4"/>
</dbReference>
<dbReference type="Proteomes" id="UP000007752">
    <property type="component" value="Chromosome 4"/>
</dbReference>
<dbReference type="Proteomes" id="UP000059680">
    <property type="component" value="Chromosome 4"/>
</dbReference>
<dbReference type="InterPro" id="IPR024438">
    <property type="entry name" value="Staygreen"/>
</dbReference>
<dbReference type="PANTHER" id="PTHR31750:SF18">
    <property type="entry name" value="MAGNESIUM DECHELATASE SGRL, CHLOROPLASTIC"/>
    <property type="match status" value="1"/>
</dbReference>
<dbReference type="PANTHER" id="PTHR31750">
    <property type="entry name" value="PROTEIN STAY-GREEN 1, CHLOROPLASTIC-RELATED"/>
    <property type="match status" value="1"/>
</dbReference>
<dbReference type="Pfam" id="PF12638">
    <property type="entry name" value="Staygreen"/>
    <property type="match status" value="1"/>
</dbReference>
<feature type="chain" id="PRO_0000425238" description="Protein STAY-GREEN LIKE, chloroplastic">
    <location>
        <begin position="1"/>
        <end position="258"/>
    </location>
</feature>
<reference key="1">
    <citation type="journal article" date="2002" name="Nature">
        <title>Sequence and analysis of rice chromosome 4.</title>
        <authorList>
            <person name="Feng Q."/>
            <person name="Zhang Y."/>
            <person name="Hao P."/>
            <person name="Wang S."/>
            <person name="Fu G."/>
            <person name="Huang Y."/>
            <person name="Li Y."/>
            <person name="Zhu J."/>
            <person name="Liu Y."/>
            <person name="Hu X."/>
            <person name="Jia P."/>
            <person name="Zhang Y."/>
            <person name="Zhao Q."/>
            <person name="Ying K."/>
            <person name="Yu S."/>
            <person name="Tang Y."/>
            <person name="Weng Q."/>
            <person name="Zhang L."/>
            <person name="Lu Y."/>
            <person name="Mu J."/>
            <person name="Lu Y."/>
            <person name="Zhang L.S."/>
            <person name="Yu Z."/>
            <person name="Fan D."/>
            <person name="Liu X."/>
            <person name="Lu T."/>
            <person name="Li C."/>
            <person name="Wu Y."/>
            <person name="Sun T."/>
            <person name="Lei H."/>
            <person name="Li T."/>
            <person name="Hu H."/>
            <person name="Guan J."/>
            <person name="Wu M."/>
            <person name="Zhang R."/>
            <person name="Zhou B."/>
            <person name="Chen Z."/>
            <person name="Chen L."/>
            <person name="Jin Z."/>
            <person name="Wang R."/>
            <person name="Yin H."/>
            <person name="Cai Z."/>
            <person name="Ren S."/>
            <person name="Lv G."/>
            <person name="Gu W."/>
            <person name="Zhu G."/>
            <person name="Tu Y."/>
            <person name="Jia J."/>
            <person name="Zhang Y."/>
            <person name="Chen J."/>
            <person name="Kang H."/>
            <person name="Chen X."/>
            <person name="Shao C."/>
            <person name="Sun Y."/>
            <person name="Hu Q."/>
            <person name="Zhang X."/>
            <person name="Zhang W."/>
            <person name="Wang L."/>
            <person name="Ding C."/>
            <person name="Sheng H."/>
            <person name="Gu J."/>
            <person name="Chen S."/>
            <person name="Ni L."/>
            <person name="Zhu F."/>
            <person name="Chen W."/>
            <person name="Lan L."/>
            <person name="Lai Y."/>
            <person name="Cheng Z."/>
            <person name="Gu M."/>
            <person name="Jiang J."/>
            <person name="Li J."/>
            <person name="Hong G."/>
            <person name="Xue Y."/>
            <person name="Han B."/>
        </authorList>
    </citation>
    <scope>NUCLEOTIDE SEQUENCE [LARGE SCALE GENOMIC DNA]</scope>
    <source>
        <strain>cv. Nipponbare</strain>
    </source>
</reference>
<reference key="2">
    <citation type="journal article" date="2005" name="Nature">
        <title>The map-based sequence of the rice genome.</title>
        <authorList>
            <consortium name="International rice genome sequencing project (IRGSP)"/>
        </authorList>
    </citation>
    <scope>NUCLEOTIDE SEQUENCE [LARGE SCALE GENOMIC DNA]</scope>
    <source>
        <strain>cv. Nipponbare</strain>
    </source>
</reference>
<reference key="3">
    <citation type="journal article" date="2008" name="Nucleic Acids Res.">
        <title>The rice annotation project database (RAP-DB): 2008 update.</title>
        <authorList>
            <consortium name="The rice annotation project (RAP)"/>
        </authorList>
    </citation>
    <scope>GENOME REANNOTATION</scope>
    <source>
        <strain>cv. Nipponbare</strain>
    </source>
</reference>
<reference key="4">
    <citation type="journal article" date="2013" name="Rice">
        <title>Improvement of the Oryza sativa Nipponbare reference genome using next generation sequence and optical map data.</title>
        <authorList>
            <person name="Kawahara Y."/>
            <person name="de la Bastide M."/>
            <person name="Hamilton J.P."/>
            <person name="Kanamori H."/>
            <person name="McCombie W.R."/>
            <person name="Ouyang S."/>
            <person name="Schwartz D.C."/>
            <person name="Tanaka T."/>
            <person name="Wu J."/>
            <person name="Zhou S."/>
            <person name="Childs K.L."/>
            <person name="Davidson R.M."/>
            <person name="Lin H."/>
            <person name="Quesada-Ocampo L."/>
            <person name="Vaillancourt B."/>
            <person name="Sakai H."/>
            <person name="Lee S.S."/>
            <person name="Kim J."/>
            <person name="Numa H."/>
            <person name="Itoh T."/>
            <person name="Buell C.R."/>
            <person name="Matsumoto T."/>
        </authorList>
    </citation>
    <scope>GENOME REANNOTATION</scope>
    <source>
        <strain>cv. Nipponbare</strain>
    </source>
</reference>
<reference key="5">
    <citation type="journal article" date="2005" name="PLoS Biol.">
        <title>The genomes of Oryza sativa: a history of duplications.</title>
        <authorList>
            <person name="Yu J."/>
            <person name="Wang J."/>
            <person name="Lin W."/>
            <person name="Li S."/>
            <person name="Li H."/>
            <person name="Zhou J."/>
            <person name="Ni P."/>
            <person name="Dong W."/>
            <person name="Hu S."/>
            <person name="Zeng C."/>
            <person name="Zhang J."/>
            <person name="Zhang Y."/>
            <person name="Li R."/>
            <person name="Xu Z."/>
            <person name="Li S."/>
            <person name="Li X."/>
            <person name="Zheng H."/>
            <person name="Cong L."/>
            <person name="Lin L."/>
            <person name="Yin J."/>
            <person name="Geng J."/>
            <person name="Li G."/>
            <person name="Shi J."/>
            <person name="Liu J."/>
            <person name="Lv H."/>
            <person name="Li J."/>
            <person name="Wang J."/>
            <person name="Deng Y."/>
            <person name="Ran L."/>
            <person name="Shi X."/>
            <person name="Wang X."/>
            <person name="Wu Q."/>
            <person name="Li C."/>
            <person name="Ren X."/>
            <person name="Wang J."/>
            <person name="Wang X."/>
            <person name="Li D."/>
            <person name="Liu D."/>
            <person name="Zhang X."/>
            <person name="Ji Z."/>
            <person name="Zhao W."/>
            <person name="Sun Y."/>
            <person name="Zhang Z."/>
            <person name="Bao J."/>
            <person name="Han Y."/>
            <person name="Dong L."/>
            <person name="Ji J."/>
            <person name="Chen P."/>
            <person name="Wu S."/>
            <person name="Liu J."/>
            <person name="Xiao Y."/>
            <person name="Bu D."/>
            <person name="Tan J."/>
            <person name="Yang L."/>
            <person name="Ye C."/>
            <person name="Zhang J."/>
            <person name="Xu J."/>
            <person name="Zhou Y."/>
            <person name="Yu Y."/>
            <person name="Zhang B."/>
            <person name="Zhuang S."/>
            <person name="Wei H."/>
            <person name="Liu B."/>
            <person name="Lei M."/>
            <person name="Yu H."/>
            <person name="Li Y."/>
            <person name="Xu H."/>
            <person name="Wei S."/>
            <person name="He X."/>
            <person name="Fang L."/>
            <person name="Zhang Z."/>
            <person name="Zhang Y."/>
            <person name="Huang X."/>
            <person name="Su Z."/>
            <person name="Tong W."/>
            <person name="Li J."/>
            <person name="Tong Z."/>
            <person name="Li S."/>
            <person name="Ye J."/>
            <person name="Wang L."/>
            <person name="Fang L."/>
            <person name="Lei T."/>
            <person name="Chen C.-S."/>
            <person name="Chen H.-C."/>
            <person name="Xu Z."/>
            <person name="Li H."/>
            <person name="Huang H."/>
            <person name="Zhang F."/>
            <person name="Xu H."/>
            <person name="Li N."/>
            <person name="Zhao C."/>
            <person name="Li S."/>
            <person name="Dong L."/>
            <person name="Huang Y."/>
            <person name="Li L."/>
            <person name="Xi Y."/>
            <person name="Qi Q."/>
            <person name="Li W."/>
            <person name="Zhang B."/>
            <person name="Hu W."/>
            <person name="Zhang Y."/>
            <person name="Tian X."/>
            <person name="Jiao Y."/>
            <person name="Liang X."/>
            <person name="Jin J."/>
            <person name="Gao L."/>
            <person name="Zheng W."/>
            <person name="Hao B."/>
            <person name="Liu S.-M."/>
            <person name="Wang W."/>
            <person name="Yuan L."/>
            <person name="Cao M."/>
            <person name="McDermott J."/>
            <person name="Samudrala R."/>
            <person name="Wang J."/>
            <person name="Wong G.K.-S."/>
            <person name="Yang H."/>
        </authorList>
    </citation>
    <scope>NUCLEOTIDE SEQUENCE [LARGE SCALE GENOMIC DNA]</scope>
    <source>
        <strain>cv. Nipponbare</strain>
    </source>
</reference>
<reference key="6">
    <citation type="journal article" date="2003" name="Science">
        <title>Collection, mapping, and annotation of over 28,000 cDNA clones from japonica rice.</title>
        <authorList>
            <consortium name="The rice full-length cDNA consortium"/>
        </authorList>
    </citation>
    <scope>NUCLEOTIDE SEQUENCE [LARGE SCALE MRNA]</scope>
    <source>
        <strain>cv. Nipponbare</strain>
    </source>
</reference>
<reference key="7">
    <citation type="journal article" date="2013" name="J. Plant Physiol.">
        <title>The Stay-Green Rice like (SGRL) gene regulates chlorophyll degradation in rice.</title>
        <authorList>
            <person name="Rong H."/>
            <person name="Tang Y."/>
            <person name="Zhang H."/>
            <person name="Wu P."/>
            <person name="Chen Y."/>
            <person name="Li M."/>
            <person name="Wu G."/>
            <person name="Jiang H."/>
        </authorList>
    </citation>
    <scope>FUNCTION</scope>
    <scope>TISSUE SPECIFICITY</scope>
    <scope>DEVELOPMENTAL STAGE</scope>
    <scope>INDUCTION BY DARK-INDUCED SENESCENCE</scope>
</reference>
<organism>
    <name type="scientific">Oryza sativa subsp. japonica</name>
    <name type="common">Rice</name>
    <dbReference type="NCBI Taxonomy" id="39947"/>
    <lineage>
        <taxon>Eukaryota</taxon>
        <taxon>Viridiplantae</taxon>
        <taxon>Streptophyta</taxon>
        <taxon>Embryophyta</taxon>
        <taxon>Tracheophyta</taxon>
        <taxon>Spermatophyta</taxon>
        <taxon>Magnoliopsida</taxon>
        <taxon>Liliopsida</taxon>
        <taxon>Poales</taxon>
        <taxon>Poaceae</taxon>
        <taxon>BOP clade</taxon>
        <taxon>Oryzoideae</taxon>
        <taxon>Oryzeae</taxon>
        <taxon>Oryzinae</taxon>
        <taxon>Oryza</taxon>
        <taxon>Oryza sativa</taxon>
    </lineage>
</organism>
<accession>Q0J8Q3</accession>
<accession>A0A0P0WGU0</accession>
<accession>Q7XK94</accession>
<name>SGRL_ORYSJ</name>